<organism>
    <name type="scientific">Rhizobium etli (strain CIAT 652)</name>
    <dbReference type="NCBI Taxonomy" id="491916"/>
    <lineage>
        <taxon>Bacteria</taxon>
        <taxon>Pseudomonadati</taxon>
        <taxon>Pseudomonadota</taxon>
        <taxon>Alphaproteobacteria</taxon>
        <taxon>Hyphomicrobiales</taxon>
        <taxon>Rhizobiaceae</taxon>
        <taxon>Rhizobium/Agrobacterium group</taxon>
        <taxon>Rhizobium</taxon>
    </lineage>
</organism>
<gene>
    <name evidence="1" type="primary">rlmH</name>
    <name type="ordered locus">RHECIAT_CH0004366</name>
</gene>
<keyword id="KW-0963">Cytoplasm</keyword>
<keyword id="KW-0489">Methyltransferase</keyword>
<keyword id="KW-0698">rRNA processing</keyword>
<keyword id="KW-0949">S-adenosyl-L-methionine</keyword>
<keyword id="KW-0808">Transferase</keyword>
<protein>
    <recommendedName>
        <fullName evidence="1">Ribosomal RNA large subunit methyltransferase H</fullName>
        <ecNumber evidence="1">2.1.1.177</ecNumber>
    </recommendedName>
    <alternativeName>
        <fullName evidence="1">23S rRNA (pseudouridine1915-N3)-methyltransferase</fullName>
    </alternativeName>
    <alternativeName>
        <fullName evidence="1">23S rRNA m3Psi1915 methyltransferase</fullName>
    </alternativeName>
    <alternativeName>
        <fullName evidence="1">rRNA (pseudouridine-N3-)-methyltransferase RlmH</fullName>
    </alternativeName>
</protein>
<reference key="1">
    <citation type="journal article" date="2010" name="Appl. Environ. Microbiol.">
        <title>Conserved symbiotic plasmid DNA sequences in the multireplicon pangenomic structure of Rhizobium etli.</title>
        <authorList>
            <person name="Gonzalez V."/>
            <person name="Acosta J.L."/>
            <person name="Santamaria R.I."/>
            <person name="Bustos P."/>
            <person name="Fernandez J.L."/>
            <person name="Hernandez Gonzalez I.L."/>
            <person name="Diaz R."/>
            <person name="Flores M."/>
            <person name="Palacios R."/>
            <person name="Mora J."/>
            <person name="Davila G."/>
        </authorList>
    </citation>
    <scope>NUCLEOTIDE SEQUENCE [LARGE SCALE GENOMIC DNA]</scope>
    <source>
        <strain>CIAT 652</strain>
    </source>
</reference>
<sequence length="160" mass="17463">MRVGLFAVGRLKSGPEKDLAARYFDRFAKAGPAVGLELARIAETAESRASNAETRKREEAAILLKSLAEGSVLILLDERGKALDSEAFANLLGAYRDQGKRDLMIAIGGADGLDPALYDRADVTLCLGKMTWPHQLVRTLIAEQLYRAVTILSGHPYHRV</sequence>
<name>RLMH_RHIE6</name>
<comment type="function">
    <text evidence="1">Specifically methylates the pseudouridine at position 1915 (m3Psi1915) in 23S rRNA.</text>
</comment>
<comment type="catalytic activity">
    <reaction evidence="1">
        <text>pseudouridine(1915) in 23S rRNA + S-adenosyl-L-methionine = N(3)-methylpseudouridine(1915) in 23S rRNA + S-adenosyl-L-homocysteine + H(+)</text>
        <dbReference type="Rhea" id="RHEA:42752"/>
        <dbReference type="Rhea" id="RHEA-COMP:10221"/>
        <dbReference type="Rhea" id="RHEA-COMP:10222"/>
        <dbReference type="ChEBI" id="CHEBI:15378"/>
        <dbReference type="ChEBI" id="CHEBI:57856"/>
        <dbReference type="ChEBI" id="CHEBI:59789"/>
        <dbReference type="ChEBI" id="CHEBI:65314"/>
        <dbReference type="ChEBI" id="CHEBI:74486"/>
        <dbReference type="EC" id="2.1.1.177"/>
    </reaction>
</comment>
<comment type="subunit">
    <text evidence="1">Homodimer.</text>
</comment>
<comment type="subcellular location">
    <subcellularLocation>
        <location evidence="1">Cytoplasm</location>
    </subcellularLocation>
</comment>
<comment type="similarity">
    <text evidence="1">Belongs to the RNA methyltransferase RlmH family.</text>
</comment>
<evidence type="ECO:0000255" key="1">
    <source>
        <dbReference type="HAMAP-Rule" id="MF_00658"/>
    </source>
</evidence>
<proteinExistence type="inferred from homology"/>
<dbReference type="EC" id="2.1.1.177" evidence="1"/>
<dbReference type="EMBL" id="CP001074">
    <property type="protein sequence ID" value="ACE93293.1"/>
    <property type="molecule type" value="Genomic_DNA"/>
</dbReference>
<dbReference type="SMR" id="B3PS03"/>
<dbReference type="KEGG" id="rec:RHECIAT_CH0004366"/>
<dbReference type="eggNOG" id="COG1576">
    <property type="taxonomic scope" value="Bacteria"/>
</dbReference>
<dbReference type="HOGENOM" id="CLU_100552_1_1_5"/>
<dbReference type="Proteomes" id="UP000008817">
    <property type="component" value="Chromosome"/>
</dbReference>
<dbReference type="GO" id="GO:0005737">
    <property type="term" value="C:cytoplasm"/>
    <property type="evidence" value="ECO:0007669"/>
    <property type="project" value="UniProtKB-SubCell"/>
</dbReference>
<dbReference type="GO" id="GO:0070038">
    <property type="term" value="F:rRNA (pseudouridine-N3-)-methyltransferase activity"/>
    <property type="evidence" value="ECO:0007669"/>
    <property type="project" value="UniProtKB-UniRule"/>
</dbReference>
<dbReference type="CDD" id="cd18081">
    <property type="entry name" value="RlmH-like"/>
    <property type="match status" value="1"/>
</dbReference>
<dbReference type="Gene3D" id="3.40.1280.10">
    <property type="match status" value="1"/>
</dbReference>
<dbReference type="HAMAP" id="MF_00658">
    <property type="entry name" value="23SrRNA_methyltr_H"/>
    <property type="match status" value="1"/>
</dbReference>
<dbReference type="InterPro" id="IPR029028">
    <property type="entry name" value="Alpha/beta_knot_MTases"/>
</dbReference>
<dbReference type="InterPro" id="IPR003742">
    <property type="entry name" value="RlmH-like"/>
</dbReference>
<dbReference type="InterPro" id="IPR029026">
    <property type="entry name" value="tRNA_m1G_MTases_N"/>
</dbReference>
<dbReference type="NCBIfam" id="NF000989">
    <property type="entry name" value="PRK00103.2-3"/>
    <property type="match status" value="1"/>
</dbReference>
<dbReference type="PANTHER" id="PTHR33603">
    <property type="entry name" value="METHYLTRANSFERASE"/>
    <property type="match status" value="1"/>
</dbReference>
<dbReference type="PANTHER" id="PTHR33603:SF1">
    <property type="entry name" value="RIBOSOMAL RNA LARGE SUBUNIT METHYLTRANSFERASE H"/>
    <property type="match status" value="1"/>
</dbReference>
<dbReference type="Pfam" id="PF02590">
    <property type="entry name" value="SPOUT_MTase"/>
    <property type="match status" value="1"/>
</dbReference>
<dbReference type="PIRSF" id="PIRSF004505">
    <property type="entry name" value="MT_bac"/>
    <property type="match status" value="1"/>
</dbReference>
<dbReference type="SUPFAM" id="SSF75217">
    <property type="entry name" value="alpha/beta knot"/>
    <property type="match status" value="1"/>
</dbReference>
<feature type="chain" id="PRO_0000366644" description="Ribosomal RNA large subunit methyltransferase H">
    <location>
        <begin position="1"/>
        <end position="160"/>
    </location>
</feature>
<feature type="binding site" evidence="1">
    <location>
        <position position="76"/>
    </location>
    <ligand>
        <name>S-adenosyl-L-methionine</name>
        <dbReference type="ChEBI" id="CHEBI:59789"/>
    </ligand>
</feature>
<feature type="binding site" evidence="1">
    <location>
        <position position="108"/>
    </location>
    <ligand>
        <name>S-adenosyl-L-methionine</name>
        <dbReference type="ChEBI" id="CHEBI:59789"/>
    </ligand>
</feature>
<feature type="binding site" evidence="1">
    <location>
        <begin position="127"/>
        <end position="132"/>
    </location>
    <ligand>
        <name>S-adenosyl-L-methionine</name>
        <dbReference type="ChEBI" id="CHEBI:59789"/>
    </ligand>
</feature>
<accession>B3PS03</accession>